<evidence type="ECO:0000250" key="1">
    <source>
        <dbReference type="UniProtKB" id="O60494"/>
    </source>
</evidence>
<evidence type="ECO:0000250" key="2">
    <source>
        <dbReference type="UniProtKB" id="O70244"/>
    </source>
</evidence>
<evidence type="ECO:0000250" key="3">
    <source>
        <dbReference type="UniProtKB" id="Q9JLB4"/>
    </source>
</evidence>
<evidence type="ECO:0000255" key="4"/>
<evidence type="ECO:0000255" key="5">
    <source>
        <dbReference type="PROSITE-ProRule" id="PRU00059"/>
    </source>
</evidence>
<evidence type="ECO:0000255" key="6">
    <source>
        <dbReference type="PROSITE-ProRule" id="PRU00076"/>
    </source>
</evidence>
<evidence type="ECO:0000269" key="7">
    <source>
    </source>
</evidence>
<evidence type="ECO:0000305" key="8"/>
<evidence type="ECO:0000312" key="9">
    <source>
        <dbReference type="Proteomes" id="UP000008227"/>
    </source>
</evidence>
<keyword id="KW-0106">Calcium</keyword>
<keyword id="KW-1003">Cell membrane</keyword>
<keyword id="KW-0153">Cholesterol metabolism</keyword>
<keyword id="KW-0165">Cleavage on pair of basic residues</keyword>
<keyword id="KW-0168">Coated pit</keyword>
<keyword id="KW-0846">Cobalamin</keyword>
<keyword id="KW-0170">Cobalt</keyword>
<keyword id="KW-1015">Disulfide bond</keyword>
<keyword id="KW-0245">EGF-like domain</keyword>
<keyword id="KW-0967">Endosome</keyword>
<keyword id="KW-0325">Glycoprotein</keyword>
<keyword id="KW-0443">Lipid metabolism</keyword>
<keyword id="KW-0458">Lysosome</keyword>
<keyword id="KW-0472">Membrane</keyword>
<keyword id="KW-0479">Metal-binding</keyword>
<keyword id="KW-0597">Phosphoprotein</keyword>
<keyword id="KW-0653">Protein transport</keyword>
<keyword id="KW-1185">Reference proteome</keyword>
<keyword id="KW-0677">Repeat</keyword>
<keyword id="KW-0732">Signal</keyword>
<keyword id="KW-0753">Steroid metabolism</keyword>
<keyword id="KW-1207">Sterol metabolism</keyword>
<keyword id="KW-0813">Transport</keyword>
<protein>
    <recommendedName>
        <fullName>Cubilin</fullName>
    </recommendedName>
    <alternativeName>
        <fullName>Intrinsic factor-cobalamin receptor</fullName>
    </alternativeName>
</protein>
<dbReference type="EMBL" id="AEMK02000074">
    <property type="status" value="NOT_ANNOTATED_CDS"/>
    <property type="molecule type" value="Genomic_DNA"/>
</dbReference>
<dbReference type="SMR" id="F1RWC3"/>
<dbReference type="FunCoup" id="F1RWC3">
    <property type="interactions" value="78"/>
</dbReference>
<dbReference type="STRING" id="9823.ENSSSCP00000011764"/>
<dbReference type="GlyCosmos" id="F1RWC3">
    <property type="glycosylation" value="44 sites, No reported glycans"/>
</dbReference>
<dbReference type="GlyGen" id="F1RWC3">
    <property type="glycosylation" value="44 sites"/>
</dbReference>
<dbReference type="PaxDb" id="9823-ENSSSCP00000026326"/>
<dbReference type="PeptideAtlas" id="F1RWC3"/>
<dbReference type="eggNOG" id="KOG4292">
    <property type="taxonomic scope" value="Eukaryota"/>
</dbReference>
<dbReference type="HOGENOM" id="CLU_006258_0_0_1"/>
<dbReference type="InParanoid" id="F1RWC3"/>
<dbReference type="OMA" id="RGFTVRW"/>
<dbReference type="TreeFam" id="TF316506"/>
<dbReference type="Proteomes" id="UP000008227">
    <property type="component" value="Unplaced"/>
</dbReference>
<dbReference type="Proteomes" id="UP000314985">
    <property type="component" value="Unplaced"/>
</dbReference>
<dbReference type="Proteomes" id="UP000694570">
    <property type="component" value="Unplaced"/>
</dbReference>
<dbReference type="Proteomes" id="UP000694571">
    <property type="component" value="Unplaced"/>
</dbReference>
<dbReference type="Proteomes" id="UP000694720">
    <property type="component" value="Unplaced"/>
</dbReference>
<dbReference type="Proteomes" id="UP000694722">
    <property type="component" value="Unplaced"/>
</dbReference>
<dbReference type="Proteomes" id="UP000694723">
    <property type="component" value="Unplaced"/>
</dbReference>
<dbReference type="Proteomes" id="UP000694724">
    <property type="component" value="Unplaced"/>
</dbReference>
<dbReference type="Proteomes" id="UP000694725">
    <property type="component" value="Unplaced"/>
</dbReference>
<dbReference type="Proteomes" id="UP000694726">
    <property type="component" value="Unplaced"/>
</dbReference>
<dbReference type="Proteomes" id="UP000694727">
    <property type="component" value="Unplaced"/>
</dbReference>
<dbReference type="Proteomes" id="UP000694728">
    <property type="component" value="Unplaced"/>
</dbReference>
<dbReference type="GO" id="GO:0016324">
    <property type="term" value="C:apical plasma membrane"/>
    <property type="evidence" value="ECO:0007669"/>
    <property type="project" value="UniProtKB-SubCell"/>
</dbReference>
<dbReference type="GO" id="GO:0005905">
    <property type="term" value="C:clathrin-coated pit"/>
    <property type="evidence" value="ECO:0007669"/>
    <property type="project" value="UniProtKB-KW"/>
</dbReference>
<dbReference type="GO" id="GO:0005768">
    <property type="term" value="C:endosome"/>
    <property type="evidence" value="ECO:0007669"/>
    <property type="project" value="UniProtKB-SubCell"/>
</dbReference>
<dbReference type="GO" id="GO:0005615">
    <property type="term" value="C:extracellular space"/>
    <property type="evidence" value="ECO:0000318"/>
    <property type="project" value="GO_Central"/>
</dbReference>
<dbReference type="GO" id="GO:0005765">
    <property type="term" value="C:lysosomal membrane"/>
    <property type="evidence" value="ECO:0007669"/>
    <property type="project" value="UniProtKB-SubCell"/>
</dbReference>
<dbReference type="GO" id="GO:0005509">
    <property type="term" value="F:calcium ion binding"/>
    <property type="evidence" value="ECO:0007669"/>
    <property type="project" value="InterPro"/>
</dbReference>
<dbReference type="GO" id="GO:0031419">
    <property type="term" value="F:cobalamin binding"/>
    <property type="evidence" value="ECO:0007669"/>
    <property type="project" value="UniProtKB-KW"/>
</dbReference>
<dbReference type="GO" id="GO:0004252">
    <property type="term" value="F:serine-type endopeptidase activity"/>
    <property type="evidence" value="ECO:0000318"/>
    <property type="project" value="GO_Central"/>
</dbReference>
<dbReference type="GO" id="GO:0008203">
    <property type="term" value="P:cholesterol metabolic process"/>
    <property type="evidence" value="ECO:0007669"/>
    <property type="project" value="UniProtKB-KW"/>
</dbReference>
<dbReference type="GO" id="GO:0015031">
    <property type="term" value="P:protein transport"/>
    <property type="evidence" value="ECO:0007669"/>
    <property type="project" value="UniProtKB-KW"/>
</dbReference>
<dbReference type="CDD" id="cd00041">
    <property type="entry name" value="CUB"/>
    <property type="match status" value="27"/>
</dbReference>
<dbReference type="CDD" id="cd22201">
    <property type="entry name" value="cubilin_NTD"/>
    <property type="match status" value="1"/>
</dbReference>
<dbReference type="CDD" id="cd00054">
    <property type="entry name" value="EGF_CA"/>
    <property type="match status" value="5"/>
</dbReference>
<dbReference type="FunFam" id="2.10.25.10:FF:000379">
    <property type="entry name" value="Cubilin"/>
    <property type="match status" value="1"/>
</dbReference>
<dbReference type="FunFam" id="2.10.25.10:FF:000429">
    <property type="entry name" value="Cubilin"/>
    <property type="match status" value="1"/>
</dbReference>
<dbReference type="FunFam" id="2.10.25.10:FF:000554">
    <property type="entry name" value="Cubilin"/>
    <property type="match status" value="1"/>
</dbReference>
<dbReference type="FunFam" id="2.10.25.10:FF:000866">
    <property type="entry name" value="Cubilin"/>
    <property type="match status" value="1"/>
</dbReference>
<dbReference type="FunFam" id="2.60.120.290:FF:000045">
    <property type="entry name" value="Cubilin"/>
    <property type="match status" value="1"/>
</dbReference>
<dbReference type="FunFam" id="2.60.120.290:FF:000047">
    <property type="entry name" value="Cubilin"/>
    <property type="match status" value="1"/>
</dbReference>
<dbReference type="FunFam" id="2.60.120.290:FF:000050">
    <property type="entry name" value="Cubilin"/>
    <property type="match status" value="1"/>
</dbReference>
<dbReference type="FunFam" id="2.60.120.290:FF:000053">
    <property type="entry name" value="Cubilin"/>
    <property type="match status" value="1"/>
</dbReference>
<dbReference type="FunFam" id="2.60.120.290:FF:000062">
    <property type="entry name" value="Cubilin"/>
    <property type="match status" value="1"/>
</dbReference>
<dbReference type="FunFam" id="2.10.25.10:FF:000633">
    <property type="entry name" value="cubilin"/>
    <property type="match status" value="1"/>
</dbReference>
<dbReference type="FunFam" id="2.60.120.290:FF:000018">
    <property type="entry name" value="cubilin"/>
    <property type="match status" value="5"/>
</dbReference>
<dbReference type="FunFam" id="2.60.120.290:FF:000061">
    <property type="entry name" value="cubilin"/>
    <property type="match status" value="1"/>
</dbReference>
<dbReference type="FunFam" id="2.60.120.290:FF:000013">
    <property type="entry name" value="Membrane frizzled-related protein"/>
    <property type="match status" value="8"/>
</dbReference>
<dbReference type="FunFam" id="2.60.120.290:FF:000003">
    <property type="entry name" value="Neuropilin"/>
    <property type="match status" value="4"/>
</dbReference>
<dbReference type="FunFam" id="2.10.25.10:FF:000260">
    <property type="entry name" value="Notch receptor 4"/>
    <property type="match status" value="1"/>
</dbReference>
<dbReference type="FunFam" id="2.60.120.290:FF:000005">
    <property type="entry name" value="Procollagen C-endopeptidase enhancer 1"/>
    <property type="match status" value="4"/>
</dbReference>
<dbReference type="FunFam" id="2.10.25.10:FF:000143">
    <property type="entry name" value="Protein crumbs 1"/>
    <property type="match status" value="1"/>
</dbReference>
<dbReference type="Gene3D" id="2.10.25.10">
    <property type="entry name" value="Laminin"/>
    <property type="match status" value="7"/>
</dbReference>
<dbReference type="Gene3D" id="2.60.120.290">
    <property type="entry name" value="Spermadhesin, CUB domain"/>
    <property type="match status" value="27"/>
</dbReference>
<dbReference type="InterPro" id="IPR000859">
    <property type="entry name" value="CUB_dom"/>
</dbReference>
<dbReference type="InterPro" id="IPR001881">
    <property type="entry name" value="EGF-like_Ca-bd_dom"/>
</dbReference>
<dbReference type="InterPro" id="IPR013032">
    <property type="entry name" value="EGF-like_CS"/>
</dbReference>
<dbReference type="InterPro" id="IPR000742">
    <property type="entry name" value="EGF-like_dom"/>
</dbReference>
<dbReference type="InterPro" id="IPR000152">
    <property type="entry name" value="EGF-type_Asp/Asn_hydroxyl_site"/>
</dbReference>
<dbReference type="InterPro" id="IPR018097">
    <property type="entry name" value="EGF_Ca-bd_CS"/>
</dbReference>
<dbReference type="InterPro" id="IPR024731">
    <property type="entry name" value="EGF_dom"/>
</dbReference>
<dbReference type="InterPro" id="IPR009030">
    <property type="entry name" value="Growth_fac_rcpt_cys_sf"/>
</dbReference>
<dbReference type="InterPro" id="IPR049883">
    <property type="entry name" value="NOTCH1_EGF-like"/>
</dbReference>
<dbReference type="InterPro" id="IPR035914">
    <property type="entry name" value="Sperma_CUB_dom_sf"/>
</dbReference>
<dbReference type="PANTHER" id="PTHR24251">
    <property type="entry name" value="OVOCHYMASE-RELATED"/>
    <property type="match status" value="1"/>
</dbReference>
<dbReference type="Pfam" id="PF00431">
    <property type="entry name" value="CUB"/>
    <property type="match status" value="27"/>
</dbReference>
<dbReference type="Pfam" id="PF00008">
    <property type="entry name" value="EGF"/>
    <property type="match status" value="3"/>
</dbReference>
<dbReference type="Pfam" id="PF12947">
    <property type="entry name" value="EGF_3"/>
    <property type="match status" value="1"/>
</dbReference>
<dbReference type="Pfam" id="PF07645">
    <property type="entry name" value="EGF_CA"/>
    <property type="match status" value="2"/>
</dbReference>
<dbReference type="Pfam" id="PF12661">
    <property type="entry name" value="hEGF"/>
    <property type="match status" value="1"/>
</dbReference>
<dbReference type="SMART" id="SM00042">
    <property type="entry name" value="CUB"/>
    <property type="match status" value="27"/>
</dbReference>
<dbReference type="SMART" id="SM00181">
    <property type="entry name" value="EGF"/>
    <property type="match status" value="8"/>
</dbReference>
<dbReference type="SMART" id="SM00179">
    <property type="entry name" value="EGF_CA"/>
    <property type="match status" value="7"/>
</dbReference>
<dbReference type="SUPFAM" id="SSF57196">
    <property type="entry name" value="EGF/Laminin"/>
    <property type="match status" value="3"/>
</dbReference>
<dbReference type="SUPFAM" id="SSF57184">
    <property type="entry name" value="Growth factor receptor domain"/>
    <property type="match status" value="1"/>
</dbReference>
<dbReference type="SUPFAM" id="SSF49854">
    <property type="entry name" value="Spermadhesin, CUB domain"/>
    <property type="match status" value="27"/>
</dbReference>
<dbReference type="PROSITE" id="PS00010">
    <property type="entry name" value="ASX_HYDROXYL"/>
    <property type="match status" value="3"/>
</dbReference>
<dbReference type="PROSITE" id="PS01180">
    <property type="entry name" value="CUB"/>
    <property type="match status" value="27"/>
</dbReference>
<dbReference type="PROSITE" id="PS00022">
    <property type="entry name" value="EGF_1"/>
    <property type="match status" value="4"/>
</dbReference>
<dbReference type="PROSITE" id="PS01186">
    <property type="entry name" value="EGF_2"/>
    <property type="match status" value="2"/>
</dbReference>
<dbReference type="PROSITE" id="PS50026">
    <property type="entry name" value="EGF_3"/>
    <property type="match status" value="7"/>
</dbReference>
<dbReference type="PROSITE" id="PS01187">
    <property type="entry name" value="EGF_CA"/>
    <property type="match status" value="4"/>
</dbReference>
<proteinExistence type="evidence at protein level"/>
<accession>F1RWC3</accession>
<name>CUBN_PIG</name>
<sequence>MVNNMSLLFLWSLVIFLTFAESYGEAGGPELQRHKRNTELQQPRMAAERGNLVFFTGLAQNIEFRTGSQGKIKLNDEDVGECLRQIQKNKFDIMNLKRGIIGLPQNVSSQIHQLESKLVDLERRFQSLQLTVDGKVCSSNPCQNGATCLNLHDSFFCICPSQWKGPLCSDDVNECEIYSGTPLGCQNGATCINTPGSYSCLCSPETHGPQCASKYDDCEGGSEMRCVHGICEDLTRVQAGEPRFRCICHAGWTSPSNSTACTLDRDECSSWPAPCSALVPCFNTLGSFYCGACPTGWQGNGYICEDINECEINNGGCSVAPPVECVNTPGSYYCPSCPPGYQGDGRMCTLIDLCSVNNGGCHPHAACSLILGSLPLCTCLPGYTGNGYGLHGCVPLSNVCLTRPCLHGQCMETASGYVCNCDSGWAGMNCTENINECLSNPCLNGGTCVDGINAFSCECTRFWTGSLCHLPQQVCGGTMSDVSGSFSYMSPDVGYVHDVDCFWVLRTEEGKVLRITFTFFQLESVDNCPHEFLQIHDGDSPAAFPLGRFCGSSPPHELLSSDNALYFHFFSEHLRNERGFTIRWETRQPECGGVLTGTYGSLKSPGYPGKYPPGRDCVWKVIASPDLLITFTFGTLSLEHHDDCRKDYLEIRDGPLHQDPVLGKFCTSLSVPPLQTTGPFARIHFHSDNQINDQGFHITYLTTPSDLHCGGNFTDPEGLLSPDLSGPFTHSRQCIYVITQPLGEQIQVNFTHVELEGQSGCSQSYIEVRDDQTLLGKVCGNETPSHIKSITNSIWIRLKIDASVVRASFGAAYQVACGGELTGEGVIRSPFYPNVYPGERICRWTIHQPQSQVVLLNFTAFEMGSSAHCDTDYIEIGSSPVLGSPENKKYCGTDIPSFITSVYNSLHVVFVKSSSTENHGFMAKFSTEALACGEILTESSGIIQSPGHPNIYPHGVNCTWHILVQPGHLIHLEIRQFHLEFHYNCTRDYLEIYDTVSDTSLGRYCGKSIPPSLTSNTNSLKLIFVADADLAYEGFVINYEATDASAGNTTALLYRRIWIFTSPNFPSNYPNNMECIYRITVETSQQIALHFTDFSLEEPIGGACAADYVEITNGGYASSPPLGKYCGSNPPPRIISHSNKLWLKFKSDFFGSGPGFSAYWDGSLTGCGGNLTTPTGTFTSPNYPMPYYHSSECFWWLKSSHGSPFELEFNDFHLEYHPNCTLDYLDVYDGLSTSSHLLTRLCGNEKPPLIRSTGDSMSLKLRTDEGQQGGGFLVKYQQTCDNVVIVNRTYGILESIHYPKPYSVNQRCNWTIQATAGNTVNYTFLAFELESHANCSTDYLELYDGPQRMGRFCGAVIPPSGSTTGSRLQVLFHTDGVGQGERGFQMQWLVHGCGGELSGDTGTFSSPGYPVGYPANKECIWYIHSSPGSSIQLTIHDFDVEYHATCNFDVLEIYGGPDFHSPRIAQLCVQRSAENPMQVSSTGNELALRFKTDSSVNGRGFNVSWRAVPGGCGGIFQAPSGEIHSPNYPSPYRSNTECTWLIQVEKNHRVLLNFTDFDLEPQDSCIMAFDGLSSATARLVGVCGRQQLSNPIISTGSSLFVRFQSGPSRQSRGFRAQFRQACGGHILTDSFDTISSPRFPASYPNNQNCSWIIQAQPPFNHITLSFSHFGLESSSTCTRDFVEILDGSHSDAPLRGRYCGSSMPHPITSFGNALMLRFVSDSSVNFDGFHATYVASTSACGGIFHMAEGIFNSPGYPEVYPSNVECVWNIASSPGNQLQLSFITFQLEDSRDCSRDFVEIREGNATGRLVGRYCGNVLPLNYSSIIGHDLWIKFVSDGSGSGVGFQAAFNNIFGNDHIVGTHGKVASPLWPRNYPHNSNYQWIVNVNESQVIHGRILEMDVEGTFNCYYDKLRIYDGADIHSRLIGTYCGAQTESFSSTGSSLTFQFSSDSSISGRGFLLEWFAMDASDGPLPTIATGACGGFLRTGDAPVFLYSPGWPGSYSNGADCMWLIQAPDSTVELNILSLDIESHRTCDYDKLVIRDGDNNMAQELAVLCGREIPGPIRSTGEYMTIRFTSDFSVTRAGFNASFHKSCGGYLHADRGIITSPGYPEAYTSNLNCSWHVQVQQGLSIAVHFEQPFQVSNRDAFCNQGDYLVLKNGPDIYSPPLGPHGGNGRFCGSRPSSTLFTSDNELFVQFISDNSNEGQGFKITYEAKSLACGGNIYIHDADSSGYVASPNHPDNYPQHADCIWVIAAPSGRPIRLEFEDQFSIEITPNCTSSYLELRDGADSNAPVLAKFCGTSLPPSQLSSGEVMYLRFRSDNSPTHAGFKAKYSIAQCGGTVTGQSGVIESSGYPALPYANNLFCEWRLQGLSGHYLTIHFEDFNLQNSSGCERDFVEIWENHTSGNLLGRYCGNTVPDSIDTSGNVALVRFVTDGFLTASGFRLRFDSSMEGCGGDLQGPTGTFTAPNYLNPNPHGWMCEWRITVQEGRRVTLTLNDLRLEAHPFCNSEHVAVFNGIRSNSPQLEKRCSSVNGSNEIRSSGNTMKVVYFTDGSRPYGGFTASYTSSEDAVCGGSLTNSPEGNFTSPGYDGTRNYSRNLNCEWTLSNSNQGNSSIYIDFEDFYLESHQDCQFDVLEFRVDNADGLLIWRLCGSSKPTMPLVIPYPQVWIHFVTNERVEHIGFRARYSFTDCGGIQIGDHGVISSPNYPASYDSLTHCSWLLEAPQGHTITLTFSDFDIEAHASCAWDSVTVRNGGSPGSPIIGHYCGSSNPRTIQSGSNQLVVIFNTDSSVQNGGFYATWNTETSGCGGILHSDTGTIRSPHWPQNFPENSRCSWTVITHPSKHLEISFDNNFLIPSGDSQCLNSFVKVWAGTQEADKDLLATSCGNVSPGRIITPRNAFTAVFQSQETPAQGFSASFLSRCGRNFTNPSGYIVSPNYPKQYDNNMNCTYIIEASPLSVILLKVVSFHLEARSTVSGSCDSDGVHIIRGHSLSSTPLVTLCGDEALSPVTISGPVLLNFYSNAHTTDFGFKFSYRITPCGGTFNLSFGIIKSPSYSYSNYPNDMHCLYTVTVRDDRVIQLKFNDFDLVPSTFCSQDYLEIYDGSNISDPLLGKFCGSTLPPNVKSSNNTMFLVFKTDSVHTARGWKISFRETLGPQQGCGGYLTGSTHTFGSPDSDSNGRYDKNLNCIWFITAPVNKLIKLTFSTFALEAATSLQRCIYDYVKLYDGDSENANLAGTFCGSTVPAPFISSGNFLTVQFVSDSSLEREGFNATYTLLDMPCGGTYNATWTSQSIWSPSSSDPDVPLTTCTWVIEAPLHQQVEITVWTFQLHSQDCDQNYLEFRDPPERNGNPGIRFCGRNASAVPTFYSSLSTAIIIFKSEVFNTDSRVGFTYRIAGCSREYQKAFGRLRSPGWPAGYASDADCAVVLRAPQNHTISLFFHAFGLEDSGGCTRDFLEVRNGSESTSPLLGKYCGTLLPNPIFSQSRDLYLRFKSDSATSGRGYEIIWTSSPSGCGGTLYGDSGLVTSPGYPGTYPNHTHCEWVIIAPGGRPVTVSFSFISIDDPGECVQNYLMLYDGPDANSPSSGPYCGADTDVAPFAASSHRVFIRFHAEAAARPSALRLTWAS</sequence>
<feature type="signal peptide" evidence="4">
    <location>
        <begin position="1"/>
        <end position="20"/>
    </location>
</feature>
<feature type="propeptide" id="PRO_0000447669" description="Removed in mature form" evidence="1">
    <location>
        <begin position="21"/>
        <end position="36"/>
    </location>
</feature>
<feature type="chain" id="PRO_5012768130" description="Cubilin" evidence="4">
    <location>
        <begin position="37"/>
        <end position="3625"/>
    </location>
</feature>
<feature type="domain" description="EGF-like 1" evidence="6">
    <location>
        <begin position="133"/>
        <end position="169"/>
    </location>
</feature>
<feature type="domain" description="EGF-like 2; calcium-binding" evidence="6">
    <location>
        <begin position="171"/>
        <end position="212"/>
    </location>
</feature>
<feature type="domain" description="EGF-like 3; calcium-binding" evidence="6">
    <location>
        <begin position="264"/>
        <end position="305"/>
    </location>
</feature>
<feature type="domain" description="EGF-like 4; calcium-binding" evidence="6">
    <location>
        <begin position="306"/>
        <end position="349"/>
    </location>
</feature>
<feature type="domain" description="EGF-like 5" evidence="6">
    <location>
        <begin position="350"/>
        <end position="394"/>
    </location>
</feature>
<feature type="domain" description="EGF-like 6" evidence="6">
    <location>
        <begin position="396"/>
        <end position="431"/>
    </location>
</feature>
<feature type="domain" description="EGF-like 7; calcium-binding" evidence="6">
    <location>
        <begin position="433"/>
        <end position="469"/>
    </location>
</feature>
<feature type="domain" description="CUB 1" evidence="5">
    <location>
        <begin position="475"/>
        <end position="587"/>
    </location>
</feature>
<feature type="domain" description="CUB 2" evidence="5">
    <location>
        <begin position="591"/>
        <end position="703"/>
    </location>
</feature>
<feature type="domain" description="CUB 3" evidence="5">
    <location>
        <begin position="709"/>
        <end position="816"/>
    </location>
</feature>
<feature type="domain" description="CUB 4" evidence="5">
    <location>
        <begin position="817"/>
        <end position="928"/>
    </location>
</feature>
<feature type="domain" description="CUB 5" evidence="5">
    <location>
        <begin position="932"/>
        <end position="1042"/>
    </location>
</feature>
<feature type="domain" description="CUB 6" evidence="5">
    <location>
        <begin position="1045"/>
        <end position="1163"/>
    </location>
</feature>
<feature type="domain" description="CUB 7" evidence="5">
    <location>
        <begin position="1167"/>
        <end position="1279"/>
    </location>
</feature>
<feature type="domain" description="CUB 8" evidence="5">
    <location>
        <begin position="1280"/>
        <end position="1391"/>
    </location>
</feature>
<feature type="domain" description="CUB 9" evidence="5">
    <location>
        <begin position="1393"/>
        <end position="1508"/>
    </location>
</feature>
<feature type="domain" description="CUB 10" evidence="5">
    <location>
        <begin position="1512"/>
        <end position="1621"/>
    </location>
</feature>
<feature type="domain" description="CUB 11" evidence="5">
    <location>
        <begin position="1622"/>
        <end position="1736"/>
    </location>
</feature>
<feature type="domain" description="CUB 12" evidence="5">
    <location>
        <begin position="1740"/>
        <end position="1852"/>
    </location>
</feature>
<feature type="domain" description="CUB 13" evidence="5">
    <location>
        <begin position="1854"/>
        <end position="1965"/>
    </location>
</feature>
<feature type="domain" description="CUB 14" evidence="5">
    <location>
        <begin position="1980"/>
        <end position="2093"/>
    </location>
</feature>
<feature type="domain" description="CUB 15" evidence="5">
    <location>
        <begin position="2094"/>
        <end position="2215"/>
    </location>
</feature>
<feature type="domain" description="CUB 16" evidence="5">
    <location>
        <begin position="2219"/>
        <end position="2336"/>
    </location>
</feature>
<feature type="domain" description="CUB 17" evidence="5">
    <location>
        <begin position="2338"/>
        <end position="2450"/>
    </location>
</feature>
<feature type="domain" description="CUB 18" evidence="5">
    <location>
        <begin position="2454"/>
        <end position="2567"/>
    </location>
</feature>
<feature type="domain" description="CUB 19" evidence="5">
    <location>
        <begin position="2572"/>
        <end position="2689"/>
    </location>
</feature>
<feature type="domain" description="CUB 20" evidence="5">
    <location>
        <begin position="2691"/>
        <end position="2803"/>
    </location>
</feature>
<feature type="domain" description="CUB 21" evidence="5">
    <location>
        <begin position="2807"/>
        <end position="2921"/>
    </location>
</feature>
<feature type="domain" description="CUB 22" evidence="5">
    <location>
        <begin position="2922"/>
        <end position="3037"/>
    </location>
</feature>
<feature type="domain" description="CUB 23" evidence="5">
    <location>
        <begin position="3039"/>
        <end position="3152"/>
    </location>
</feature>
<feature type="domain" description="CUB 24" evidence="5">
    <location>
        <begin position="3159"/>
        <end position="3276"/>
    </location>
</feature>
<feature type="domain" description="CUB 25" evidence="5">
    <location>
        <begin position="3280"/>
        <end position="3397"/>
    </location>
</feature>
<feature type="domain" description="CUB 26" evidence="5">
    <location>
        <begin position="3397"/>
        <end position="3509"/>
    </location>
</feature>
<feature type="domain" description="CUB 27" evidence="5">
    <location>
        <begin position="3513"/>
        <end position="3625"/>
    </location>
</feature>
<feature type="region of interest" description="Interaction with AMN" evidence="1">
    <location>
        <begin position="43"/>
        <end position="50"/>
    </location>
</feature>
<feature type="binding site" evidence="1">
    <location>
        <position position="980"/>
    </location>
    <ligand>
        <name>Ca(2+)</name>
        <dbReference type="ChEBI" id="CHEBI:29108"/>
        <label>1</label>
    </ligand>
</feature>
<feature type="binding site" evidence="1">
    <location>
        <position position="988"/>
    </location>
    <ligand>
        <name>Ca(2+)</name>
        <dbReference type="ChEBI" id="CHEBI:29108"/>
        <label>1</label>
    </ligand>
</feature>
<feature type="binding site" evidence="1">
    <location>
        <position position="1027"/>
    </location>
    <ligand>
        <name>Ca(2+)</name>
        <dbReference type="ChEBI" id="CHEBI:29108"/>
        <label>1</label>
    </ligand>
</feature>
<feature type="binding site" evidence="1">
    <location>
        <position position="1029"/>
    </location>
    <ligand>
        <name>Ca(2+)</name>
        <dbReference type="ChEBI" id="CHEBI:29108"/>
        <label>1</label>
    </ligand>
</feature>
<feature type="binding site" evidence="1">
    <location>
        <position position="1030"/>
    </location>
    <ligand>
        <name>Ca(2+)</name>
        <dbReference type="ChEBI" id="CHEBI:29108"/>
        <label>1</label>
    </ligand>
</feature>
<feature type="binding site" evidence="1">
    <location>
        <position position="1097"/>
    </location>
    <ligand>
        <name>Ca(2+)</name>
        <dbReference type="ChEBI" id="CHEBI:29108"/>
        <label>2</label>
    </ligand>
</feature>
<feature type="binding site" evidence="1">
    <location>
        <position position="1107"/>
    </location>
    <ligand>
        <name>Ca(2+)</name>
        <dbReference type="ChEBI" id="CHEBI:29108"/>
        <label>2</label>
    </ligand>
</feature>
<feature type="binding site" evidence="1">
    <location>
        <position position="1148"/>
    </location>
    <ligand>
        <name>Ca(2+)</name>
        <dbReference type="ChEBI" id="CHEBI:29108"/>
        <label>2</label>
    </ligand>
</feature>
<feature type="binding site" evidence="1">
    <location>
        <position position="1215"/>
    </location>
    <ligand>
        <name>Ca(2+)</name>
        <dbReference type="ChEBI" id="CHEBI:29108"/>
        <label>3</label>
    </ligand>
</feature>
<feature type="binding site" evidence="1">
    <location>
        <position position="1223"/>
    </location>
    <ligand>
        <name>Ca(2+)</name>
        <dbReference type="ChEBI" id="CHEBI:29108"/>
        <label>3</label>
    </ligand>
</feature>
<feature type="binding site" evidence="1">
    <location>
        <position position="1264"/>
    </location>
    <ligand>
        <name>Ca(2+)</name>
        <dbReference type="ChEBI" id="CHEBI:29108"/>
        <label>3</label>
    </ligand>
</feature>
<feature type="binding site" evidence="1">
    <location>
        <position position="1266"/>
    </location>
    <ligand>
        <name>Ca(2+)</name>
        <dbReference type="ChEBI" id="CHEBI:29108"/>
        <label>3</label>
    </ligand>
</feature>
<feature type="binding site" evidence="1">
    <location>
        <position position="1267"/>
    </location>
    <ligand>
        <name>Ca(2+)</name>
        <dbReference type="ChEBI" id="CHEBI:29108"/>
        <label>3</label>
    </ligand>
</feature>
<feature type="binding site" evidence="1">
    <location>
        <position position="1330"/>
    </location>
    <ligand>
        <name>Ca(2+)</name>
        <dbReference type="ChEBI" id="CHEBI:29108"/>
        <label>4</label>
    </ligand>
</feature>
<feature type="binding site" evidence="1">
    <location>
        <position position="1338"/>
    </location>
    <ligand>
        <name>Ca(2+)</name>
        <dbReference type="ChEBI" id="CHEBI:29108"/>
        <label>4</label>
    </ligand>
</feature>
<feature type="binding site" evidence="1">
    <location>
        <position position="1375"/>
    </location>
    <ligand>
        <name>Ca(2+)</name>
        <dbReference type="ChEBI" id="CHEBI:29108"/>
        <label>4</label>
    </ligand>
</feature>
<feature type="binding site" evidence="1">
    <location>
        <position position="1377"/>
    </location>
    <ligand>
        <name>Ca(2+)</name>
        <dbReference type="ChEBI" id="CHEBI:29108"/>
        <label>4</label>
    </ligand>
</feature>
<feature type="site" description="Cleavage; by furin" evidence="4">
    <location>
        <begin position="36"/>
        <end position="37"/>
    </location>
</feature>
<feature type="modified residue" description="Phosphothreonine" evidence="2">
    <location>
        <position position="3010"/>
    </location>
</feature>
<feature type="glycosylation site" description="N-linked (GlcNAc...) asparagine" evidence="4">
    <location>
        <position position="106"/>
    </location>
</feature>
<feature type="glycosylation site" description="N-linked (GlcNAc...) asparagine" evidence="4">
    <location>
        <position position="257"/>
    </location>
</feature>
<feature type="glycosylation site" description="N-linked (GlcNAc...) asparagine" evidence="4">
    <location>
        <position position="429"/>
    </location>
</feature>
<feature type="glycosylation site" description="N-linked (GlcNAc...) asparagine" evidence="4">
    <location>
        <position position="712"/>
    </location>
</feature>
<feature type="glycosylation site" description="N-linked (GlcNAc...) asparagine" evidence="4">
    <location>
        <position position="749"/>
    </location>
</feature>
<feature type="glycosylation site" description="N-linked (GlcNAc...) asparagine" evidence="4">
    <location>
        <position position="781"/>
    </location>
</feature>
<feature type="glycosylation site" description="N-linked (GlcNAc...) asparagine" evidence="4">
    <location>
        <position position="857"/>
    </location>
</feature>
<feature type="glycosylation site" description="N-linked (GlcNAc...) asparagine" evidence="4">
    <location>
        <position position="957"/>
    </location>
</feature>
<feature type="glycosylation site" description="N-linked (GlcNAc...) asparagine" evidence="4">
    <location>
        <position position="984"/>
    </location>
</feature>
<feature type="glycosylation site" description="N-linked (GlcNAc...) asparagine" evidence="4">
    <location>
        <position position="1048"/>
    </location>
</feature>
<feature type="glycosylation site" description="N-linked (GlcNAc...) asparagine" evidence="4">
    <location>
        <position position="1170"/>
    </location>
</feature>
<feature type="glycosylation site" description="N-linked (GlcNAc...) asparagine" evidence="4">
    <location>
        <position position="1219"/>
    </location>
</feature>
<feature type="glycosylation site" description="N-linked (GlcNAc...) asparagine" evidence="4">
    <location>
        <position position="1287"/>
    </location>
</feature>
<feature type="glycosylation site" description="N-linked (GlcNAc...) asparagine" evidence="4">
    <location>
        <position position="1309"/>
    </location>
</feature>
<feature type="glycosylation site" description="N-linked (GlcNAc...) asparagine" evidence="4">
    <location>
        <position position="1321"/>
    </location>
</feature>
<feature type="glycosylation site" description="N-linked (GlcNAc...) asparagine" evidence="4">
    <location>
        <position position="1334"/>
    </location>
</feature>
<feature type="glycosylation site" description="N-linked (GlcNAc...) asparagine" evidence="4">
    <location>
        <position position="1502"/>
    </location>
</feature>
<feature type="glycosylation site" description="N-linked (GlcNAc...) asparagine" evidence="4">
    <location>
        <position position="1553"/>
    </location>
</feature>
<feature type="glycosylation site" description="N-linked (GlcNAc...) asparagine" evidence="4">
    <location>
        <position position="1648"/>
    </location>
</feature>
<feature type="glycosylation site" description="N-linked (GlcNAc...) asparagine" evidence="4">
    <location>
        <position position="1804"/>
    </location>
</feature>
<feature type="glycosylation site" description="N-linked (GlcNAc...) asparagine" evidence="4">
    <location>
        <position position="1821"/>
    </location>
</feature>
<feature type="glycosylation site" description="N-linked (GlcNAc...) asparagine" evidence="4">
    <location>
        <position position="1887"/>
    </location>
</feature>
<feature type="glycosylation site" description="N-linked (GlcNAc...) asparagine" evidence="4">
    <location>
        <position position="2087"/>
    </location>
</feature>
<feature type="glycosylation site" description="N-linked (GlcNAc...) asparagine" evidence="4">
    <location>
        <position position="2119"/>
    </location>
</feature>
<feature type="glycosylation site" description="N-linked (GlcNAc...) asparagine" evidence="4">
    <location>
        <position position="2276"/>
    </location>
</feature>
<feature type="glycosylation site" description="N-linked (GlcNAc...) asparagine" evidence="4">
    <location>
        <position position="2388"/>
    </location>
</feature>
<feature type="glycosylation site" description="N-linked (GlcNAc...) asparagine" evidence="4">
    <location>
        <position position="2402"/>
    </location>
</feature>
<feature type="glycosylation site" description="N-linked (GlcNAc...) asparagine" evidence="4">
    <location>
        <position position="2533"/>
    </location>
</feature>
<feature type="glycosylation site" description="N-linked (GlcNAc...) asparagine" evidence="4">
    <location>
        <position position="2583"/>
    </location>
</feature>
<feature type="glycosylation site" description="N-linked (GlcNAc...) asparagine" evidence="4">
    <location>
        <position position="2594"/>
    </location>
</feature>
<feature type="glycosylation site" description="N-linked (GlcNAc...) asparagine" evidence="4">
    <location>
        <position position="2612"/>
    </location>
</feature>
<feature type="glycosylation site" description="N-linked (GlcNAc...) asparagine" evidence="4">
    <location>
        <position position="2887"/>
    </location>
</feature>
<feature type="glycosylation site" description="N-linked (GlcNAc...) asparagine" evidence="4">
    <location>
        <position position="2925"/>
    </location>
</feature>
<feature type="glycosylation site" description="N-linked (GlcNAc...) asparagine" evidence="4">
    <location>
        <position position="2928"/>
    </location>
</feature>
<feature type="glycosylation site" description="N-linked (GlcNAc...) asparagine" evidence="4">
    <location>
        <position position="2947"/>
    </location>
</feature>
<feature type="glycosylation site" description="N-linked (GlcNAc...) asparagine" evidence="4">
    <location>
        <position position="3044"/>
    </location>
</feature>
<feature type="glycosylation site" description="N-linked (GlcNAc...) asparagine" evidence="4">
    <location>
        <position position="3105"/>
    </location>
</feature>
<feature type="glycosylation site" description="N-linked (GlcNAc...) asparagine" evidence="4">
    <location>
        <position position="3127"/>
    </location>
</feature>
<feature type="glycosylation site" description="N-linked (GlcNAc...) asparagine" evidence="4">
    <location>
        <position position="3270"/>
    </location>
</feature>
<feature type="glycosylation site" description="N-linked (GlcNAc...) asparagine" evidence="4">
    <location>
        <position position="3285"/>
    </location>
</feature>
<feature type="glycosylation site" description="N-linked (GlcNAc...) asparagine" evidence="4">
    <location>
        <position position="3359"/>
    </location>
</feature>
<feature type="glycosylation site" description="N-linked (GlcNAc...) asparagine" evidence="4">
    <location>
        <position position="3432"/>
    </location>
</feature>
<feature type="glycosylation site" description="N-linked (GlcNAc...) asparagine" evidence="4">
    <location>
        <position position="3459"/>
    </location>
</feature>
<feature type="glycosylation site" description="N-linked (GlcNAc...) asparagine" evidence="4">
    <location>
        <position position="3535"/>
    </location>
</feature>
<feature type="disulfide bond" evidence="6">
    <location>
        <begin position="137"/>
        <end position="148"/>
    </location>
</feature>
<feature type="disulfide bond" evidence="6">
    <location>
        <begin position="142"/>
        <end position="157"/>
    </location>
</feature>
<feature type="disulfide bond" evidence="6">
    <location>
        <begin position="159"/>
        <end position="168"/>
    </location>
</feature>
<feature type="disulfide bond" evidence="6">
    <location>
        <begin position="175"/>
        <end position="191"/>
    </location>
</feature>
<feature type="disulfide bond" evidence="6">
    <location>
        <begin position="185"/>
        <end position="200"/>
    </location>
</feature>
<feature type="disulfide bond" evidence="6">
    <location>
        <begin position="202"/>
        <end position="211"/>
    </location>
</feature>
<feature type="disulfide bond" evidence="6">
    <location>
        <begin position="268"/>
        <end position="281"/>
    </location>
</feature>
<feature type="disulfide bond" evidence="6">
    <location>
        <begin position="275"/>
        <end position="290"/>
    </location>
</feature>
<feature type="disulfide bond" evidence="6">
    <location>
        <begin position="293"/>
        <end position="304"/>
    </location>
</feature>
<feature type="disulfide bond" evidence="6">
    <location>
        <begin position="310"/>
        <end position="325"/>
    </location>
</feature>
<feature type="disulfide bond" evidence="6">
    <location>
        <begin position="317"/>
        <end position="334"/>
    </location>
</feature>
<feature type="disulfide bond" evidence="6">
    <location>
        <begin position="337"/>
        <end position="348"/>
    </location>
</feature>
<feature type="disulfide bond" evidence="6">
    <location>
        <begin position="354"/>
        <end position="367"/>
    </location>
</feature>
<feature type="disulfide bond" evidence="6">
    <location>
        <begin position="361"/>
        <end position="377"/>
    </location>
</feature>
<feature type="disulfide bond" evidence="6">
    <location>
        <begin position="379"/>
        <end position="393"/>
    </location>
</feature>
<feature type="disulfide bond" evidence="6">
    <location>
        <begin position="400"/>
        <end position="410"/>
    </location>
</feature>
<feature type="disulfide bond" evidence="6">
    <location>
        <begin position="405"/>
        <end position="419"/>
    </location>
</feature>
<feature type="disulfide bond" evidence="6">
    <location>
        <begin position="421"/>
        <end position="430"/>
    </location>
</feature>
<feature type="disulfide bond" evidence="6">
    <location>
        <begin position="437"/>
        <end position="448"/>
    </location>
</feature>
<feature type="disulfide bond" evidence="6">
    <location>
        <begin position="442"/>
        <end position="457"/>
    </location>
</feature>
<feature type="disulfide bond" evidence="6">
    <location>
        <begin position="459"/>
        <end position="468"/>
    </location>
</feature>
<feature type="disulfide bond" evidence="5">
    <location>
        <begin position="475"/>
        <end position="501"/>
    </location>
</feature>
<feature type="disulfide bond" evidence="5">
    <location>
        <begin position="528"/>
        <end position="550"/>
    </location>
</feature>
<feature type="disulfide bond" evidence="5">
    <location>
        <begin position="591"/>
        <end position="617"/>
    </location>
</feature>
<feature type="disulfide bond" evidence="5">
    <location>
        <begin position="644"/>
        <end position="666"/>
    </location>
</feature>
<feature type="disulfide bond" evidence="5">
    <location>
        <begin position="709"/>
        <end position="734"/>
    </location>
</feature>
<feature type="disulfide bond" evidence="5">
    <location>
        <begin position="761"/>
        <end position="779"/>
    </location>
</feature>
<feature type="disulfide bond" evidence="5">
    <location>
        <begin position="817"/>
        <end position="842"/>
    </location>
</feature>
<feature type="disulfide bond" evidence="5">
    <location>
        <begin position="869"/>
        <end position="891"/>
    </location>
</feature>
<feature type="disulfide bond" evidence="5">
    <location>
        <begin position="932"/>
        <end position="958"/>
    </location>
</feature>
<feature type="disulfide bond" evidence="5">
    <location>
        <begin position="985"/>
        <end position="1005"/>
    </location>
</feature>
<feature type="disulfide bond" evidence="5">
    <location>
        <begin position="1104"/>
        <end position="1126"/>
    </location>
</feature>
<feature type="disulfide bond" evidence="5">
    <location>
        <begin position="1167"/>
        <end position="1193"/>
    </location>
</feature>
<feature type="disulfide bond" evidence="5">
    <location>
        <begin position="1220"/>
        <end position="1242"/>
    </location>
</feature>
<feature type="disulfide bond" evidence="5">
    <location>
        <begin position="1280"/>
        <end position="1308"/>
    </location>
</feature>
<feature type="disulfide bond" evidence="5">
    <location>
        <begin position="1335"/>
        <end position="1353"/>
    </location>
</feature>
<feature type="disulfide bond" evidence="5">
    <location>
        <begin position="1393"/>
        <end position="1419"/>
    </location>
</feature>
<feature type="disulfide bond" evidence="5">
    <location>
        <begin position="1446"/>
        <end position="1468"/>
    </location>
</feature>
<feature type="disulfide bond" evidence="5">
    <location>
        <begin position="1512"/>
        <end position="1538"/>
    </location>
</feature>
<feature type="disulfide bond" evidence="5">
    <location>
        <begin position="1565"/>
        <end position="1583"/>
    </location>
</feature>
<feature type="disulfide bond" evidence="5">
    <location>
        <begin position="1622"/>
        <end position="1649"/>
    </location>
</feature>
<feature type="disulfide bond" evidence="5">
    <location>
        <begin position="1677"/>
        <end position="1699"/>
    </location>
</feature>
<feature type="disulfide bond" evidence="5">
    <location>
        <begin position="1740"/>
        <end position="1766"/>
    </location>
</feature>
<feature type="disulfide bond" evidence="5">
    <location>
        <begin position="1793"/>
        <end position="1814"/>
    </location>
</feature>
<feature type="disulfide bond" evidence="5">
    <location>
        <begin position="1907"/>
        <end position="1929"/>
    </location>
</feature>
<feature type="disulfide bond" evidence="5">
    <location>
        <begin position="1980"/>
        <end position="2008"/>
    </location>
</feature>
<feature type="disulfide bond" evidence="5">
    <location>
        <begin position="2034"/>
        <end position="2056"/>
    </location>
</feature>
<feature type="disulfide bond" evidence="5">
    <location>
        <begin position="2094"/>
        <end position="2120"/>
    </location>
</feature>
<feature type="disulfide bond" evidence="5">
    <location>
        <begin position="2219"/>
        <end position="2249"/>
    </location>
</feature>
<feature type="disulfide bond" evidence="5">
    <location>
        <begin position="2277"/>
        <end position="2299"/>
    </location>
</feature>
<feature type="disulfide bond" evidence="5">
    <location>
        <begin position="2338"/>
        <end position="2365"/>
    </location>
</feature>
<feature type="disulfide bond" evidence="5">
    <location>
        <begin position="2392"/>
        <end position="2413"/>
    </location>
</feature>
<feature type="disulfide bond" evidence="5">
    <location>
        <begin position="2454"/>
        <end position="2480"/>
    </location>
</feature>
<feature type="disulfide bond" evidence="5">
    <location>
        <begin position="2507"/>
        <end position="2529"/>
    </location>
</feature>
<feature type="disulfide bond" evidence="5">
    <location>
        <begin position="2572"/>
        <end position="2601"/>
    </location>
</feature>
<feature type="disulfide bond" evidence="5">
    <location>
        <begin position="2630"/>
        <end position="2651"/>
    </location>
</feature>
<feature type="disulfide bond" evidence="5">
    <location>
        <begin position="2691"/>
        <end position="2717"/>
    </location>
</feature>
<feature type="disulfide bond" evidence="5">
    <location>
        <begin position="2744"/>
        <end position="2766"/>
    </location>
</feature>
<feature type="disulfide bond" evidence="5">
    <location>
        <begin position="2807"/>
        <end position="2833"/>
    </location>
</feature>
<feature type="disulfide bond" evidence="5">
    <location>
        <begin position="2862"/>
        <end position="2885"/>
    </location>
</feature>
<feature type="disulfide bond" evidence="5">
    <location>
        <begin position="2922"/>
        <end position="2948"/>
    </location>
</feature>
<feature type="disulfide bond" evidence="5">
    <location>
        <begin position="2979"/>
        <end position="3001"/>
    </location>
</feature>
<feature type="disulfide bond" evidence="5">
    <location>
        <begin position="3039"/>
        <end position="3066"/>
    </location>
</feature>
<feature type="disulfide bond" evidence="5">
    <location>
        <begin position="3093"/>
        <end position="3115"/>
    </location>
</feature>
<feature type="disulfide bond" evidence="5">
    <location>
        <begin position="3159"/>
        <end position="3187"/>
    </location>
</feature>
<feature type="disulfide bond" evidence="5">
    <location>
        <begin position="3217"/>
        <end position="3239"/>
    </location>
</feature>
<feature type="disulfide bond" evidence="5">
    <location>
        <begin position="3280"/>
        <end position="3308"/>
    </location>
</feature>
<feature type="disulfide bond" evidence="5">
    <location>
        <begin position="3334"/>
        <end position="3356"/>
    </location>
</feature>
<feature type="disulfide bond" evidence="5">
    <location>
        <begin position="3397"/>
        <end position="3423"/>
    </location>
</feature>
<feature type="disulfide bond" evidence="5">
    <location>
        <begin position="3450"/>
        <end position="3472"/>
    </location>
</feature>
<feature type="disulfide bond" evidence="5">
    <location>
        <begin position="3513"/>
        <end position="3539"/>
    </location>
</feature>
<feature type="disulfide bond" evidence="5">
    <location>
        <begin position="3566"/>
        <end position="3588"/>
    </location>
</feature>
<organism evidence="9">
    <name type="scientific">Sus scrofa</name>
    <name type="common">Pig</name>
    <dbReference type="NCBI Taxonomy" id="9823"/>
    <lineage>
        <taxon>Eukaryota</taxon>
        <taxon>Metazoa</taxon>
        <taxon>Chordata</taxon>
        <taxon>Craniata</taxon>
        <taxon>Vertebrata</taxon>
        <taxon>Euteleostomi</taxon>
        <taxon>Mammalia</taxon>
        <taxon>Eutheria</taxon>
        <taxon>Laurasiatheria</taxon>
        <taxon>Artiodactyla</taxon>
        <taxon>Suina</taxon>
        <taxon>Suidae</taxon>
        <taxon>Sus</taxon>
    </lineage>
</organism>
<comment type="function">
    <text evidence="1">Endocytic receptor which plays a role in lipoprotein, vitamin and iron metabolism by facilitating their uptake. Acts together with LRP2 to mediate endocytosis of high-density lipoproteins, GC, hemoglobin, ALB, TF and SCGB1A1. Acts together with AMN to mediate endocytosis of the CBLIF-cobalamin complex. Binds to ALB, MB, Kappa and lambda-light chains, TF, hemoglobin, GC, SCGB1A1, APOA1, high density lipoprotein, and the CBLIF-cobalamin complex. Ligand binding requires calcium. Serves as important transporter in several absorptive epithelia, including intestine, renal proximal tubules and embryonic yolk sac. May play an important role in the development of the peri-implantation embryo through internalization of APOA1 and cholesterol. Binds to LGALS3 at the maternal-fetal interface.</text>
</comment>
<comment type="subunit">
    <text evidence="1 7">Interacts with AMN. Component of the cubam complex composed of one CUBN trimer and one AMN chain (PubMed:30523278). The cubam complex can dimerize (PubMed:30523278). Interacts with LRP2 in a dual-receptor complex in a calcium-dependent manner. Found in a complex with PID1/PCLI1, LRP1 and CUBNI. Interacts with LRP1 and PID1/PCLI1 (By similarity).</text>
</comment>
<comment type="subcellular location">
    <subcellularLocation>
        <location evidence="3">Apical cell membrane</location>
        <topology evidence="1">Peripheral membrane protein</topology>
    </subcellularLocation>
    <subcellularLocation>
        <location evidence="1">Cell membrane</location>
        <topology evidence="1">Peripheral membrane protein</topology>
    </subcellularLocation>
    <subcellularLocation>
        <location evidence="1">Membrane</location>
        <location evidence="1">Coated pit</location>
    </subcellularLocation>
    <subcellularLocation>
        <location evidence="1">Endosome</location>
    </subcellularLocation>
    <subcellularLocation>
        <location evidence="2">Lysosome membrane</location>
        <topology evidence="8">Peripheral membrane protein</topology>
    </subcellularLocation>
    <text evidence="1 2">Lacks a transmembrane domain and depends on interaction with AMN for location at the plasma membrane (By similarity). Colocalizes with AMN and LRP2 in the endocytotic apparatus of epithelial cells (By similarity).</text>
</comment>
<comment type="tissue specificity">
    <text evidence="7">Detected in kidney cortex (at protein level).</text>
</comment>
<comment type="domain">
    <text evidence="2">The CUB domains 5 to 8 mediate binding to CBLIF and ALB. CUB domains 1 and 2 mediate interaction with LRP2.</text>
</comment>
<comment type="domain">
    <text evidence="7">The cubam complex is composed of a 400 Angstrom long stem and a globular crown region. The stem region is probably formed by AMN and the CUBN N-terminal region, including the EGF-like domains. The crown is probably formed by the CUBN CUB domains.</text>
</comment>
<comment type="PTM">
    <text evidence="1">The precursor is cleaved by a trans-Golgi proteinase furin, removing a propeptide.</text>
</comment>
<comment type="PTM">
    <text evidence="1">N-glycosylated.</text>
</comment>
<reference key="1">
    <citation type="submission" date="2009-11" db="EMBL/GenBank/DDBJ databases">
        <authorList>
            <consortium name="Porcine genome sequencing project"/>
        </authorList>
    </citation>
    <scope>NUCLEOTIDE SEQUENCE [LARGE SCALE GENOMIC DNA]</scope>
    <source>
        <strain>Duroc</strain>
    </source>
</reference>
<reference key="2">
    <citation type="journal article" date="2018" name="Nat. Commun.">
        <title>Structural assembly of the megadalton-sized receptor for intestinal vitamin B12 uptake and kidney protein reabsorption.</title>
        <authorList>
            <person name="Larsen C."/>
            <person name="Etzerodt A."/>
            <person name="Madsen M."/>
            <person name="Skjodt K."/>
            <person name="Moestrup S.K."/>
            <person name="Andersen C.B.F."/>
        </authorList>
    </citation>
    <scope>STRUCTURE BY ELECTRON MICROSCOPY IN COMPLEX WITH AMN</scope>
    <scope>SUBUNIT</scope>
    <scope>DOMAIN</scope>
    <scope>TISSUE SPECIFICITY</scope>
</reference>
<gene>
    <name type="primary">CUBN</name>
    <name type="synonym">IFCR</name>
</gene>